<gene>
    <name type="primary">Cd2</name>
</gene>
<protein>
    <recommendedName>
        <fullName>T-cell surface antigen CD2</fullName>
    </recommendedName>
    <alternativeName>
        <fullName>LFA-2</fullName>
    </alternativeName>
    <alternativeName>
        <fullName>LFA-3 receptor</fullName>
    </alternativeName>
    <alternativeName>
        <fullName evidence="9">OX-34 antigen</fullName>
    </alternativeName>
    <alternativeName>
        <fullName>T-cell surface antigen T11/Leu-5</fullName>
    </alternativeName>
    <cdAntigenName>CD2</cdAntigenName>
</protein>
<proteinExistence type="evidence at protein level"/>
<sequence>MRCKFLGSFFLLFSLSSKGADCRDSGTVWGALGHGINLNIPNFQMTDDIDEVRWERGSTLVAEFKRKMKPFLKSGAFEILANGDLKIKNLTRDDSGTYNVTVYSTNGTRILNKALDLRILEMVSKPMIYWECSNATLTCEVLEGTDVELKLYQGKEHLRSLRQKTMSYQWTNLRAPFKCKAVNRVSQESEMEVVNCPEKGLPLYLIVGVSAGGLLLVFFGALFIFCICKRKKRNRRRKGEELEIKASRMSTVERGPKPHSTQASAPASQNPVASQAPPPPGHHLQTPGHRPLPPSHRNREHQPKKRPPPSGTQVHQQKGPPLPRPRVQPKPPCGSGDVSLPPPN</sequence>
<evidence type="ECO:0000250" key="1">
    <source>
        <dbReference type="UniProtKB" id="P06729"/>
    </source>
</evidence>
<evidence type="ECO:0000250" key="2">
    <source>
        <dbReference type="UniProtKB" id="P08920"/>
    </source>
</evidence>
<evidence type="ECO:0000255" key="3"/>
<evidence type="ECO:0000256" key="4">
    <source>
        <dbReference type="SAM" id="MobiDB-lite"/>
    </source>
</evidence>
<evidence type="ECO:0000269" key="5">
    <source>
    </source>
</evidence>
<evidence type="ECO:0000269" key="6">
    <source>
    </source>
</evidence>
<evidence type="ECO:0000269" key="7">
    <source>
    </source>
</evidence>
<evidence type="ECO:0000269" key="8">
    <source>
    </source>
</evidence>
<evidence type="ECO:0000303" key="9">
    <source>
    </source>
</evidence>
<evidence type="ECO:0000305" key="10"/>
<evidence type="ECO:0000312" key="11">
    <source>
        <dbReference type="EMBL" id="AAH88164.1"/>
    </source>
</evidence>
<evidence type="ECO:0007744" key="12">
    <source>
        <dbReference type="PDB" id="1HNG"/>
    </source>
</evidence>
<evidence type="ECO:0007829" key="13">
    <source>
        <dbReference type="PDB" id="1A64"/>
    </source>
</evidence>
<evidence type="ECO:0007829" key="14">
    <source>
        <dbReference type="PDB" id="1CCZ"/>
    </source>
</evidence>
<dbReference type="EMBL" id="X05111">
    <property type="protein sequence ID" value="CAA28757.1"/>
    <property type="molecule type" value="mRNA"/>
</dbReference>
<dbReference type="EMBL" id="AABR07012723">
    <property type="status" value="NOT_ANNOTATED_CDS"/>
    <property type="molecule type" value="Genomic_DNA"/>
</dbReference>
<dbReference type="EMBL" id="CH474015">
    <property type="protein sequence ID" value="EDL85525.1"/>
    <property type="molecule type" value="Genomic_DNA"/>
</dbReference>
<dbReference type="EMBL" id="BC088164">
    <property type="protein sequence ID" value="AAH88164.1"/>
    <property type="molecule type" value="mRNA"/>
</dbReference>
<dbReference type="PIR" id="A33071">
    <property type="entry name" value="RWRTC2"/>
</dbReference>
<dbReference type="RefSeq" id="NP_036962.2">
    <property type="nucleotide sequence ID" value="NM_012830.2"/>
</dbReference>
<dbReference type="PDB" id="1A64">
    <property type="method" value="X-ray"/>
    <property type="resolution" value="2.00 A"/>
    <property type="chains" value="A/B=23-121"/>
</dbReference>
<dbReference type="PDB" id="1A6P">
    <property type="method" value="X-ray"/>
    <property type="resolution" value="2.08 A"/>
    <property type="chains" value="A/B=26-121"/>
</dbReference>
<dbReference type="PDB" id="1A7B">
    <property type="method" value="X-ray"/>
    <property type="resolution" value="3.10 A"/>
    <property type="chains" value="A/B/C/D=23-121"/>
</dbReference>
<dbReference type="PDB" id="1CCZ">
    <property type="method" value="X-ray"/>
    <property type="resolution" value="1.80 A"/>
    <property type="chains" value="A=122-198"/>
</dbReference>
<dbReference type="PDB" id="1CDC">
    <property type="method" value="X-ray"/>
    <property type="resolution" value="2.00 A"/>
    <property type="chains" value="A/B=23-121"/>
</dbReference>
<dbReference type="PDB" id="1HNG">
    <property type="method" value="X-ray"/>
    <property type="resolution" value="2.80 A"/>
    <property type="chains" value="A/B=23-198"/>
</dbReference>
<dbReference type="PDB" id="1T6W">
    <property type="method" value="NMR"/>
    <property type="chains" value="A=23-121"/>
</dbReference>
<dbReference type="PDB" id="2DRU">
    <property type="method" value="X-ray"/>
    <property type="resolution" value="2.60 A"/>
    <property type="chains" value="A=121-199"/>
</dbReference>
<dbReference type="PDBsum" id="1A64"/>
<dbReference type="PDBsum" id="1A6P"/>
<dbReference type="PDBsum" id="1A7B"/>
<dbReference type="PDBsum" id="1CCZ"/>
<dbReference type="PDBsum" id="1CDC"/>
<dbReference type="PDBsum" id="1HNG"/>
<dbReference type="PDBsum" id="1T6W"/>
<dbReference type="PDBsum" id="2DRU"/>
<dbReference type="BMRB" id="P08921"/>
<dbReference type="SMR" id="P08921"/>
<dbReference type="FunCoup" id="P08921">
    <property type="interactions" value="277"/>
</dbReference>
<dbReference type="IntAct" id="P08921">
    <property type="interactions" value="1"/>
</dbReference>
<dbReference type="MINT" id="P08921"/>
<dbReference type="STRING" id="10116.ENSRNOP00000021268"/>
<dbReference type="GlyCosmos" id="P08921">
    <property type="glycosylation" value="3 sites, No reported glycans"/>
</dbReference>
<dbReference type="GlyGen" id="P08921">
    <property type="glycosylation" value="3 sites"/>
</dbReference>
<dbReference type="iPTMnet" id="P08921"/>
<dbReference type="PhosphoSitePlus" id="P08921"/>
<dbReference type="PaxDb" id="10116-ENSRNOP00000021268"/>
<dbReference type="ABCD" id="P08921">
    <property type="antibodies" value="1 sequenced antibody"/>
</dbReference>
<dbReference type="Ensembl" id="ENSRNOT00000021268.8">
    <property type="protein sequence ID" value="ENSRNOP00000021268.6"/>
    <property type="gene ID" value="ENSRNOG00000015821.8"/>
</dbReference>
<dbReference type="GeneID" id="497761"/>
<dbReference type="KEGG" id="rno:497761"/>
<dbReference type="UCSC" id="RGD:2297">
    <property type="organism name" value="rat"/>
</dbReference>
<dbReference type="AGR" id="RGD:2297"/>
<dbReference type="CTD" id="914"/>
<dbReference type="RGD" id="2297">
    <property type="gene designation" value="Cd2"/>
</dbReference>
<dbReference type="eggNOG" id="ENOG502S5UN">
    <property type="taxonomic scope" value="Eukaryota"/>
</dbReference>
<dbReference type="GeneTree" id="ENSGT01030000234540"/>
<dbReference type="HOGENOM" id="CLU_069390_0_0_1"/>
<dbReference type="InParanoid" id="P08921"/>
<dbReference type="OMA" id="DIPNFQM"/>
<dbReference type="OrthoDB" id="8439544at2759"/>
<dbReference type="PhylomeDB" id="P08921"/>
<dbReference type="EvolutionaryTrace" id="P08921"/>
<dbReference type="PRO" id="PR:P08921"/>
<dbReference type="Proteomes" id="UP000002494">
    <property type="component" value="Chromosome 2"/>
</dbReference>
<dbReference type="Proteomes" id="UP000234681">
    <property type="component" value="Chromosome 2"/>
</dbReference>
<dbReference type="Bgee" id="ENSRNOG00000015821">
    <property type="expression patterns" value="Expressed in thymus and 17 other cell types or tissues"/>
</dbReference>
<dbReference type="GO" id="GO:0009986">
    <property type="term" value="C:cell surface"/>
    <property type="evidence" value="ECO:0000314"/>
    <property type="project" value="RGD"/>
</dbReference>
<dbReference type="GO" id="GO:0005911">
    <property type="term" value="C:cell-cell junction"/>
    <property type="evidence" value="ECO:0000266"/>
    <property type="project" value="RGD"/>
</dbReference>
<dbReference type="GO" id="GO:0009898">
    <property type="term" value="C:cytoplasmic side of plasma membrane"/>
    <property type="evidence" value="ECO:0000266"/>
    <property type="project" value="RGD"/>
</dbReference>
<dbReference type="GO" id="GO:0009897">
    <property type="term" value="C:external side of plasma membrane"/>
    <property type="evidence" value="ECO:0000266"/>
    <property type="project" value="RGD"/>
</dbReference>
<dbReference type="GO" id="GO:0005576">
    <property type="term" value="C:extracellular region"/>
    <property type="evidence" value="ECO:0000266"/>
    <property type="project" value="RGD"/>
</dbReference>
<dbReference type="GO" id="GO:0005794">
    <property type="term" value="C:Golgi apparatus"/>
    <property type="evidence" value="ECO:0007669"/>
    <property type="project" value="Ensembl"/>
</dbReference>
<dbReference type="GO" id="GO:0005654">
    <property type="term" value="C:nucleoplasm"/>
    <property type="evidence" value="ECO:0007669"/>
    <property type="project" value="Ensembl"/>
</dbReference>
<dbReference type="GO" id="GO:0005886">
    <property type="term" value="C:plasma membrane"/>
    <property type="evidence" value="ECO:0000266"/>
    <property type="project" value="RGD"/>
</dbReference>
<dbReference type="GO" id="GO:0032991">
    <property type="term" value="C:protein-containing complex"/>
    <property type="evidence" value="ECO:0000314"/>
    <property type="project" value="RGD"/>
</dbReference>
<dbReference type="GO" id="GO:0042802">
    <property type="term" value="F:identical protein binding"/>
    <property type="evidence" value="ECO:0000353"/>
    <property type="project" value="RGD"/>
</dbReference>
<dbReference type="GO" id="GO:0019901">
    <property type="term" value="F:protein kinase binding"/>
    <property type="evidence" value="ECO:0000353"/>
    <property type="project" value="RGD"/>
</dbReference>
<dbReference type="GO" id="GO:0030971">
    <property type="term" value="F:receptor tyrosine kinase binding"/>
    <property type="evidence" value="ECO:0000353"/>
    <property type="project" value="RGD"/>
</dbReference>
<dbReference type="GO" id="GO:0005102">
    <property type="term" value="F:signaling receptor binding"/>
    <property type="evidence" value="ECO:0000266"/>
    <property type="project" value="RGD"/>
</dbReference>
<dbReference type="GO" id="GO:0098609">
    <property type="term" value="P:cell-cell adhesion"/>
    <property type="evidence" value="ECO:0000315"/>
    <property type="project" value="RGD"/>
</dbReference>
<dbReference type="GO" id="GO:0034113">
    <property type="term" value="P:heterotypic cell-cell adhesion"/>
    <property type="evidence" value="ECO:0000266"/>
    <property type="project" value="RGD"/>
</dbReference>
<dbReference type="GO" id="GO:0006955">
    <property type="term" value="P:immune response"/>
    <property type="evidence" value="ECO:0000318"/>
    <property type="project" value="GO_Central"/>
</dbReference>
<dbReference type="GO" id="GO:0030101">
    <property type="term" value="P:natural killer cell activation"/>
    <property type="evidence" value="ECO:0000266"/>
    <property type="project" value="RGD"/>
</dbReference>
<dbReference type="GO" id="GO:0042267">
    <property type="term" value="P:natural killer cell mediated cytotoxicity"/>
    <property type="evidence" value="ECO:0000266"/>
    <property type="project" value="RGD"/>
</dbReference>
<dbReference type="GO" id="GO:0032757">
    <property type="term" value="P:positive regulation of interleukin-8 production"/>
    <property type="evidence" value="ECO:0000266"/>
    <property type="project" value="RGD"/>
</dbReference>
<dbReference type="GO" id="GO:0032760">
    <property type="term" value="P:positive regulation of tumor necrosis factor production"/>
    <property type="evidence" value="ECO:0000266"/>
    <property type="project" value="RGD"/>
</dbReference>
<dbReference type="GO" id="GO:0032729">
    <property type="term" value="P:positive regulation of type II interferon production"/>
    <property type="evidence" value="ECO:0000266"/>
    <property type="project" value="RGD"/>
</dbReference>
<dbReference type="CDD" id="cd05775">
    <property type="entry name" value="IgV_CD2_like_N"/>
    <property type="match status" value="1"/>
</dbReference>
<dbReference type="FunFam" id="2.60.40.10:FF:001736">
    <property type="entry name" value="T-cell surface antigen CD2"/>
    <property type="match status" value="1"/>
</dbReference>
<dbReference type="Gene3D" id="2.60.40.10">
    <property type="entry name" value="Immunoglobulins"/>
    <property type="match status" value="2"/>
</dbReference>
<dbReference type="InterPro" id="IPR015632">
    <property type="entry name" value="CD2"/>
</dbReference>
<dbReference type="InterPro" id="IPR015631">
    <property type="entry name" value="CD2/SLAM_rcpt"/>
</dbReference>
<dbReference type="InterPro" id="IPR036179">
    <property type="entry name" value="Ig-like_dom_sf"/>
</dbReference>
<dbReference type="InterPro" id="IPR013783">
    <property type="entry name" value="Ig-like_fold"/>
</dbReference>
<dbReference type="InterPro" id="IPR008424">
    <property type="entry name" value="Ig_C2-set"/>
</dbReference>
<dbReference type="InterPro" id="IPR013106">
    <property type="entry name" value="Ig_V-set"/>
</dbReference>
<dbReference type="PANTHER" id="PTHR12080">
    <property type="entry name" value="SIGNALING LYMPHOCYTIC ACTIVATION MOLECULE"/>
    <property type="match status" value="1"/>
</dbReference>
<dbReference type="PANTHER" id="PTHR12080:SF54">
    <property type="entry name" value="T-CELL SURFACE ANTIGEN CD2"/>
    <property type="match status" value="1"/>
</dbReference>
<dbReference type="Pfam" id="PF05790">
    <property type="entry name" value="C2-set"/>
    <property type="match status" value="1"/>
</dbReference>
<dbReference type="Pfam" id="PF07686">
    <property type="entry name" value="V-set"/>
    <property type="match status" value="1"/>
</dbReference>
<dbReference type="PRINTS" id="PR01870">
    <property type="entry name" value="CD2ANTIGEN"/>
</dbReference>
<dbReference type="SUPFAM" id="SSF48726">
    <property type="entry name" value="Immunoglobulin"/>
    <property type="match status" value="2"/>
</dbReference>
<name>CD2_RAT</name>
<comment type="function">
    <text evidence="7">CD2 interacts with lymphocyte function-associated antigen CD58 (LFA-3) and CD48/BCM1 to mediate adhesion between T-cells and other cell types. CD2 is implicated in the triggering of T-cells, the cytoplasmic domain is implicated in the signaling function.</text>
</comment>
<comment type="subunit">
    <text evidence="1 2 6">Interacts with CD48 (PubMed:16803907). Interacts with CD58 (LFA-3) (By similarity). Interacts with CD2AP (By similarity). Interacts with PSTPIP1 (By similarity). Interacts with FCGR3A; this interaction modulates NK cell activation and cytotoxicity.</text>
</comment>
<comment type="subcellular location">
    <subcellularLocation>
        <location evidence="8">Cell membrane</location>
        <topology evidence="10">Single-pass type I membrane protein</topology>
    </subcellularLocation>
</comment>
<organism>
    <name type="scientific">Rattus norvegicus</name>
    <name type="common">Rat</name>
    <dbReference type="NCBI Taxonomy" id="10116"/>
    <lineage>
        <taxon>Eukaryota</taxon>
        <taxon>Metazoa</taxon>
        <taxon>Chordata</taxon>
        <taxon>Craniata</taxon>
        <taxon>Vertebrata</taxon>
        <taxon>Euteleostomi</taxon>
        <taxon>Mammalia</taxon>
        <taxon>Eutheria</taxon>
        <taxon>Euarchontoglires</taxon>
        <taxon>Glires</taxon>
        <taxon>Rodentia</taxon>
        <taxon>Myomorpha</taxon>
        <taxon>Muroidea</taxon>
        <taxon>Muridae</taxon>
        <taxon>Murinae</taxon>
        <taxon>Rattus</taxon>
    </lineage>
</organism>
<keyword id="KW-0002">3D-structure</keyword>
<keyword id="KW-0130">Cell adhesion</keyword>
<keyword id="KW-1003">Cell membrane</keyword>
<keyword id="KW-0903">Direct protein sequencing</keyword>
<keyword id="KW-1015">Disulfide bond</keyword>
<keyword id="KW-0325">Glycoprotein</keyword>
<keyword id="KW-0393">Immunoglobulin domain</keyword>
<keyword id="KW-0472">Membrane</keyword>
<keyword id="KW-1185">Reference proteome</keyword>
<keyword id="KW-0677">Repeat</keyword>
<keyword id="KW-0732">Signal</keyword>
<keyword id="KW-0812">Transmembrane</keyword>
<keyword id="KW-1133">Transmembrane helix</keyword>
<feature type="signal peptide">
    <location>
        <begin position="1"/>
        <end position="22"/>
    </location>
</feature>
<feature type="chain" id="PRO_0000014603" description="T-cell surface antigen CD2">
    <location>
        <begin position="23"/>
        <end position="344"/>
    </location>
</feature>
<feature type="topological domain" description="Extracellular" evidence="3">
    <location>
        <begin position="23"/>
        <end position="202"/>
    </location>
</feature>
<feature type="transmembrane region" description="Helical" evidence="3">
    <location>
        <begin position="203"/>
        <end position="228"/>
    </location>
</feature>
<feature type="topological domain" description="Cytoplasmic" evidence="3">
    <location>
        <begin position="229"/>
        <end position="344"/>
    </location>
</feature>
<feature type="domain" description="Ig-like V-type">
    <location>
        <begin position="23"/>
        <end position="121"/>
    </location>
</feature>
<feature type="domain" description="Ig-like C2-type">
    <location>
        <begin position="122"/>
        <end position="202"/>
    </location>
</feature>
<feature type="region of interest" description="CD58 binding region 1" evidence="1">
    <location>
        <begin position="56"/>
        <end position="68"/>
    </location>
</feature>
<feature type="region of interest" description="CD58 binding region 2" evidence="1">
    <location>
        <begin position="99"/>
        <end position="113"/>
    </location>
</feature>
<feature type="region of interest" description="Disordered" evidence="4">
    <location>
        <begin position="237"/>
        <end position="344"/>
    </location>
</feature>
<feature type="compositionally biased region" description="Polar residues" evidence="4">
    <location>
        <begin position="259"/>
        <end position="273"/>
    </location>
</feature>
<feature type="compositionally biased region" description="Basic residues" evidence="4">
    <location>
        <begin position="296"/>
        <end position="307"/>
    </location>
</feature>
<feature type="compositionally biased region" description="Pro residues" evidence="4">
    <location>
        <begin position="320"/>
        <end position="332"/>
    </location>
</feature>
<feature type="glycosylation site" description="N-linked (GlcNAc...) asparagine" evidence="3">
    <location>
        <position position="99"/>
    </location>
</feature>
<feature type="glycosylation site" description="N-linked (GlcNAc...) asparagine" evidence="3">
    <location>
        <position position="106"/>
    </location>
</feature>
<feature type="glycosylation site" description="N-linked (GlcNAc...) asparagine" evidence="6">
    <location>
        <position position="134"/>
    </location>
</feature>
<feature type="disulfide bond" evidence="5 6 12">
    <location>
        <begin position="132"/>
        <end position="196"/>
    </location>
</feature>
<feature type="disulfide bond" evidence="5 6 12">
    <location>
        <begin position="139"/>
        <end position="179"/>
    </location>
</feature>
<feature type="sequence conflict" description="In Ref. 1; CAA28757." ref="1">
    <original>N</original>
    <variation>D</variation>
    <location>
        <position position="112"/>
    </location>
</feature>
<feature type="strand" evidence="13">
    <location>
        <begin position="27"/>
        <end position="31"/>
    </location>
</feature>
<feature type="strand" evidence="13">
    <location>
        <begin position="36"/>
        <end position="38"/>
    </location>
</feature>
<feature type="strand" evidence="13">
    <location>
        <begin position="49"/>
        <end position="56"/>
    </location>
</feature>
<feature type="strand" evidence="13">
    <location>
        <begin position="59"/>
        <end position="67"/>
    </location>
</feature>
<feature type="strand" evidence="13">
    <location>
        <begin position="71"/>
        <end position="74"/>
    </location>
</feature>
<feature type="strand" evidence="13">
    <location>
        <begin position="77"/>
        <end position="79"/>
    </location>
</feature>
<feature type="strand" evidence="13">
    <location>
        <begin position="85"/>
        <end position="89"/>
    </location>
</feature>
<feature type="helix" evidence="13">
    <location>
        <begin position="92"/>
        <end position="94"/>
    </location>
</feature>
<feature type="strand" evidence="13">
    <location>
        <begin position="96"/>
        <end position="104"/>
    </location>
</feature>
<feature type="strand" evidence="13">
    <location>
        <begin position="109"/>
        <end position="120"/>
    </location>
</feature>
<feature type="strand" evidence="14">
    <location>
        <begin position="127"/>
        <end position="131"/>
    </location>
</feature>
<feature type="turn" evidence="14">
    <location>
        <begin position="132"/>
        <end position="135"/>
    </location>
</feature>
<feature type="strand" evidence="14">
    <location>
        <begin position="136"/>
        <end position="140"/>
    </location>
</feature>
<feature type="strand" evidence="14">
    <location>
        <begin position="148"/>
        <end position="153"/>
    </location>
</feature>
<feature type="strand" evidence="14">
    <location>
        <begin position="156"/>
        <end position="169"/>
    </location>
</feature>
<feature type="strand" evidence="14">
    <location>
        <begin position="177"/>
        <end position="183"/>
    </location>
</feature>
<feature type="strand" evidence="14">
    <location>
        <begin position="186"/>
        <end position="192"/>
    </location>
</feature>
<accession>P08921</accession>
<accession>F1M9W7</accession>
<accession>Q5I0M6</accession>
<reference key="1">
    <citation type="journal article" date="1987" name="J. Exp. Med.">
        <title>Similarities in sequences and cellular expression between rat CD2 and CD4 antigens.</title>
        <authorList>
            <person name="Williams A.F."/>
            <person name="Barclay A.N."/>
            <person name="Clark S.J."/>
            <person name="Paterson D.J."/>
            <person name="Willis A.C."/>
        </authorList>
    </citation>
    <scope>NUCLEOTIDE SEQUENCE [MRNA]</scope>
    <scope>PARTIAL PROTEIN SEQUENCE</scope>
    <scope>TISSUE SPECIFICITY</scope>
    <scope>SUBCELLULAR LOCATION</scope>
    <source>
        <strain>AO</strain>
    </source>
</reference>
<reference key="2">
    <citation type="journal article" date="2004" name="Nature">
        <title>Genome sequence of the Brown Norway rat yields insights into mammalian evolution.</title>
        <authorList>
            <person name="Gibbs R.A."/>
            <person name="Weinstock G.M."/>
            <person name="Metzker M.L."/>
            <person name="Muzny D.M."/>
            <person name="Sodergren E.J."/>
            <person name="Scherer S."/>
            <person name="Scott G."/>
            <person name="Steffen D."/>
            <person name="Worley K.C."/>
            <person name="Burch P.E."/>
            <person name="Okwuonu G."/>
            <person name="Hines S."/>
            <person name="Lewis L."/>
            <person name="Deramo C."/>
            <person name="Delgado O."/>
            <person name="Dugan-Rocha S."/>
            <person name="Miner G."/>
            <person name="Morgan M."/>
            <person name="Hawes A."/>
            <person name="Gill R."/>
            <person name="Holt R.A."/>
            <person name="Adams M.D."/>
            <person name="Amanatides P.G."/>
            <person name="Baden-Tillson H."/>
            <person name="Barnstead M."/>
            <person name="Chin S."/>
            <person name="Evans C.A."/>
            <person name="Ferriera S."/>
            <person name="Fosler C."/>
            <person name="Glodek A."/>
            <person name="Gu Z."/>
            <person name="Jennings D."/>
            <person name="Kraft C.L."/>
            <person name="Nguyen T."/>
            <person name="Pfannkoch C.M."/>
            <person name="Sitter C."/>
            <person name="Sutton G.G."/>
            <person name="Venter J.C."/>
            <person name="Woodage T."/>
            <person name="Smith D."/>
            <person name="Lee H.-M."/>
            <person name="Gustafson E."/>
            <person name="Cahill P."/>
            <person name="Kana A."/>
            <person name="Doucette-Stamm L."/>
            <person name="Weinstock K."/>
            <person name="Fechtel K."/>
            <person name="Weiss R.B."/>
            <person name="Dunn D.M."/>
            <person name="Green E.D."/>
            <person name="Blakesley R.W."/>
            <person name="Bouffard G.G."/>
            <person name="De Jong P.J."/>
            <person name="Osoegawa K."/>
            <person name="Zhu B."/>
            <person name="Marra M."/>
            <person name="Schein J."/>
            <person name="Bosdet I."/>
            <person name="Fjell C."/>
            <person name="Jones S."/>
            <person name="Krzywinski M."/>
            <person name="Mathewson C."/>
            <person name="Siddiqui A."/>
            <person name="Wye N."/>
            <person name="McPherson J."/>
            <person name="Zhao S."/>
            <person name="Fraser C.M."/>
            <person name="Shetty J."/>
            <person name="Shatsman S."/>
            <person name="Geer K."/>
            <person name="Chen Y."/>
            <person name="Abramzon S."/>
            <person name="Nierman W.C."/>
            <person name="Havlak P.H."/>
            <person name="Chen R."/>
            <person name="Durbin K.J."/>
            <person name="Egan A."/>
            <person name="Ren Y."/>
            <person name="Song X.-Z."/>
            <person name="Li B."/>
            <person name="Liu Y."/>
            <person name="Qin X."/>
            <person name="Cawley S."/>
            <person name="Cooney A.J."/>
            <person name="D'Souza L.M."/>
            <person name="Martin K."/>
            <person name="Wu J.Q."/>
            <person name="Gonzalez-Garay M.L."/>
            <person name="Jackson A.R."/>
            <person name="Kalafus K.J."/>
            <person name="McLeod M.P."/>
            <person name="Milosavljevic A."/>
            <person name="Virk D."/>
            <person name="Volkov A."/>
            <person name="Wheeler D.A."/>
            <person name="Zhang Z."/>
            <person name="Bailey J.A."/>
            <person name="Eichler E.E."/>
            <person name="Tuzun E."/>
            <person name="Birney E."/>
            <person name="Mongin E."/>
            <person name="Ureta-Vidal A."/>
            <person name="Woodwark C."/>
            <person name="Zdobnov E."/>
            <person name="Bork P."/>
            <person name="Suyama M."/>
            <person name="Torrents D."/>
            <person name="Alexandersson M."/>
            <person name="Trask B.J."/>
            <person name="Young J.M."/>
            <person name="Huang H."/>
            <person name="Wang H."/>
            <person name="Xing H."/>
            <person name="Daniels S."/>
            <person name="Gietzen D."/>
            <person name="Schmidt J."/>
            <person name="Stevens K."/>
            <person name="Vitt U."/>
            <person name="Wingrove J."/>
            <person name="Camara F."/>
            <person name="Mar Alba M."/>
            <person name="Abril J.F."/>
            <person name="Guigo R."/>
            <person name="Smit A."/>
            <person name="Dubchak I."/>
            <person name="Rubin E.M."/>
            <person name="Couronne O."/>
            <person name="Poliakov A."/>
            <person name="Huebner N."/>
            <person name="Ganten D."/>
            <person name="Goesele C."/>
            <person name="Hummel O."/>
            <person name="Kreitler T."/>
            <person name="Lee Y.-A."/>
            <person name="Monti J."/>
            <person name="Schulz H."/>
            <person name="Zimdahl H."/>
            <person name="Himmelbauer H."/>
            <person name="Lehrach H."/>
            <person name="Jacob H.J."/>
            <person name="Bromberg S."/>
            <person name="Gullings-Handley J."/>
            <person name="Jensen-Seaman M.I."/>
            <person name="Kwitek A.E."/>
            <person name="Lazar J."/>
            <person name="Pasko D."/>
            <person name="Tonellato P.J."/>
            <person name="Twigger S."/>
            <person name="Ponting C.P."/>
            <person name="Duarte J.M."/>
            <person name="Rice S."/>
            <person name="Goodstadt L."/>
            <person name="Beatson S.A."/>
            <person name="Emes R.D."/>
            <person name="Winter E.E."/>
            <person name="Webber C."/>
            <person name="Brandt P."/>
            <person name="Nyakatura G."/>
            <person name="Adetobi M."/>
            <person name="Chiaromonte F."/>
            <person name="Elnitski L."/>
            <person name="Eswara P."/>
            <person name="Hardison R.C."/>
            <person name="Hou M."/>
            <person name="Kolbe D."/>
            <person name="Makova K."/>
            <person name="Miller W."/>
            <person name="Nekrutenko A."/>
            <person name="Riemer C."/>
            <person name="Schwartz S."/>
            <person name="Taylor J."/>
            <person name="Yang S."/>
            <person name="Zhang Y."/>
            <person name="Lindpaintner K."/>
            <person name="Andrews T.D."/>
            <person name="Caccamo M."/>
            <person name="Clamp M."/>
            <person name="Clarke L."/>
            <person name="Curwen V."/>
            <person name="Durbin R.M."/>
            <person name="Eyras E."/>
            <person name="Searle S.M."/>
            <person name="Cooper G.M."/>
            <person name="Batzoglou S."/>
            <person name="Brudno M."/>
            <person name="Sidow A."/>
            <person name="Stone E.A."/>
            <person name="Payseur B.A."/>
            <person name="Bourque G."/>
            <person name="Lopez-Otin C."/>
            <person name="Puente X.S."/>
            <person name="Chakrabarti K."/>
            <person name="Chatterji S."/>
            <person name="Dewey C."/>
            <person name="Pachter L."/>
            <person name="Bray N."/>
            <person name="Yap V.B."/>
            <person name="Caspi A."/>
            <person name="Tesler G."/>
            <person name="Pevzner P.A."/>
            <person name="Haussler D."/>
            <person name="Roskin K.M."/>
            <person name="Baertsch R."/>
            <person name="Clawson H."/>
            <person name="Furey T.S."/>
            <person name="Hinrichs A.S."/>
            <person name="Karolchik D."/>
            <person name="Kent W.J."/>
            <person name="Rosenbloom K.R."/>
            <person name="Trumbower H."/>
            <person name="Weirauch M."/>
            <person name="Cooper D.N."/>
            <person name="Stenson P.D."/>
            <person name="Ma B."/>
            <person name="Brent M."/>
            <person name="Arumugam M."/>
            <person name="Shteynberg D."/>
            <person name="Copley R.R."/>
            <person name="Taylor M.S."/>
            <person name="Riethman H."/>
            <person name="Mudunuri U."/>
            <person name="Peterson J."/>
            <person name="Guyer M."/>
            <person name="Felsenfeld A."/>
            <person name="Old S."/>
            <person name="Mockrin S."/>
            <person name="Collins F.S."/>
        </authorList>
    </citation>
    <scope>NUCLEOTIDE SEQUENCE [LARGE SCALE GENOMIC DNA]</scope>
    <source>
        <strain>Brown Norway</strain>
    </source>
</reference>
<reference key="3">
    <citation type="submission" date="2005-09" db="EMBL/GenBank/DDBJ databases">
        <authorList>
            <person name="Mural R.J."/>
            <person name="Adams M.D."/>
            <person name="Myers E.W."/>
            <person name="Smith H.O."/>
            <person name="Venter J.C."/>
        </authorList>
    </citation>
    <scope>NUCLEOTIDE SEQUENCE [LARGE SCALE GENOMIC DNA]</scope>
    <scope>IDENTIFICATION</scope>
</reference>
<reference key="4">
    <citation type="journal article" date="2004" name="Genome Res.">
        <title>The status, quality, and expansion of the NIH full-length cDNA project: the Mammalian Gene Collection (MGC).</title>
        <authorList>
            <consortium name="The MGC Project Team"/>
        </authorList>
    </citation>
    <scope>NUCLEOTIDE SEQUENCE [LARGE SCALE MRNA]</scope>
    <source>
        <tissue evidence="11">Spleen</tissue>
    </source>
</reference>
<reference key="5">
    <citation type="journal article" date="1988" name="Cell">
        <title>A role in transmembrane signaling for the cytoplasmic domain of the CD2 T lymphocyte surface antigen.</title>
        <authorList>
            <person name="He Q."/>
            <person name="Beyers A.D."/>
            <person name="Barclay A.N."/>
            <person name="Williams A.F."/>
        </authorList>
    </citation>
    <scope>IMPORTANCE OF C-TERMINAL IN SIGNALING</scope>
    <scope>FUNCTION</scope>
</reference>
<reference key="6">
    <citation type="journal article" date="1992" name="Nature">
        <title>Crystal structure at 2.8-A resolution of a soluble form of the cell adhesion molecule CD2.</title>
        <authorList>
            <person name="Jones E.Y."/>
            <person name="Davis S.J."/>
            <person name="Williams A.F."/>
            <person name="Harlos K."/>
            <person name="Stuart D.I."/>
        </authorList>
    </citation>
    <scope>X-RAY CRYSTALLOGRAPHY (2.8 ANGSTROMS) OF 23-198</scope>
    <scope>DISULFIDE BONDS</scope>
</reference>
<reference key="7">
    <citation type="journal article" date="1995" name="Proc. Natl. Acad. Sci. U.S.A.">
        <title>One sequence, two folds: a metastable structure of CD2.</title>
        <authorList>
            <person name="Murray A.J."/>
            <person name="Lewis S.J."/>
            <person name="Barclay A.N."/>
            <person name="Brady R.L."/>
        </authorList>
    </citation>
    <scope>X-RAY CRYSTALLOGRAPHY (2.0 ANGSTROMS) OF 23-121</scope>
</reference>
<reference key="8">
    <citation type="journal article" date="1998" name="Nat. Struct. Biol.">
        <title>Engineering an intertwined form of CD2 for stability and assembly.</title>
        <authorList>
            <person name="Murray A.J."/>
            <person name="Head J.G."/>
            <person name="Barker J.J."/>
            <person name="Brady R.L."/>
        </authorList>
    </citation>
    <scope>X-RAY CRYSTALLOGRAPHY (2.0 ANGSTROMS) OF 23-121</scope>
</reference>
<reference key="9">
    <citation type="journal article" date="1991" name="Nature">
        <title>Structure of domain 1 of rat T lymphocyte CD2 antigen.</title>
        <authorList>
            <person name="Driscoll P.C."/>
            <person name="Cyster J.G."/>
            <person name="Campbell I.D."/>
            <person name="Williams A.F."/>
        </authorList>
    </citation>
    <scope>STRUCTURE BY NMR OF 23-121</scope>
</reference>
<reference key="10">
    <citation type="journal article" date="2006" name="J. Biol. Chem.">
        <title>Crystal structure and binding properties of the CD2 and CD244 (2B4)-binding protein, CD48.</title>
        <authorList>
            <person name="Evans E.J."/>
            <person name="Castro M.A."/>
            <person name="O'Brien R."/>
            <person name="Kearney A."/>
            <person name="Walsh H."/>
            <person name="Sparks L.M."/>
            <person name="Tucknott M.G."/>
            <person name="Davies E.A."/>
            <person name="Carmo A.M."/>
            <person name="van der Merwe P.A."/>
            <person name="Stuart D.I."/>
            <person name="Jones E.Y."/>
            <person name="Ladbury J.E."/>
            <person name="Ikemizu S."/>
            <person name="Davis S.J."/>
        </authorList>
    </citation>
    <scope>X-RAY CRYSTALLOGRAPHY (2.6 ANGSTROMS) OF 121-199 IN COMPLEX WITH CD48</scope>
    <scope>GLYCOSYLATION AT ASN-134</scope>
    <scope>DISULFIDE BOND</scope>
</reference>